<reference key="1">
    <citation type="journal article" date="2006" name="Proc. Natl. Acad. Sci. U.S.A.">
        <title>Comparative genomics of the lactic acid bacteria.</title>
        <authorList>
            <person name="Makarova K.S."/>
            <person name="Slesarev A."/>
            <person name="Wolf Y.I."/>
            <person name="Sorokin A."/>
            <person name="Mirkin B."/>
            <person name="Koonin E.V."/>
            <person name="Pavlov A."/>
            <person name="Pavlova N."/>
            <person name="Karamychev V."/>
            <person name="Polouchine N."/>
            <person name="Shakhova V."/>
            <person name="Grigoriev I."/>
            <person name="Lou Y."/>
            <person name="Rohksar D."/>
            <person name="Lucas S."/>
            <person name="Huang K."/>
            <person name="Goodstein D.M."/>
            <person name="Hawkins T."/>
            <person name="Plengvidhya V."/>
            <person name="Welker D."/>
            <person name="Hughes J."/>
            <person name="Goh Y."/>
            <person name="Benson A."/>
            <person name="Baldwin K."/>
            <person name="Lee J.-H."/>
            <person name="Diaz-Muniz I."/>
            <person name="Dosti B."/>
            <person name="Smeianov V."/>
            <person name="Wechter W."/>
            <person name="Barabote R."/>
            <person name="Lorca G."/>
            <person name="Altermann E."/>
            <person name="Barrangou R."/>
            <person name="Ganesan B."/>
            <person name="Xie Y."/>
            <person name="Rawsthorne H."/>
            <person name="Tamir D."/>
            <person name="Parker C."/>
            <person name="Breidt F."/>
            <person name="Broadbent J.R."/>
            <person name="Hutkins R."/>
            <person name="O'Sullivan D."/>
            <person name="Steele J."/>
            <person name="Unlu G."/>
            <person name="Saier M.H. Jr."/>
            <person name="Klaenhammer T."/>
            <person name="Richardson P."/>
            <person name="Kozyavkin S."/>
            <person name="Weimer B.C."/>
            <person name="Mills D.A."/>
        </authorList>
    </citation>
    <scope>NUCLEOTIDE SEQUENCE [LARGE SCALE GENOMIC DNA]</scope>
    <source>
        <strain>ATCC BAA-331 / PSU-1</strain>
    </source>
</reference>
<accession>Q04DD2</accession>
<organism>
    <name type="scientific">Oenococcus oeni (strain ATCC BAA-331 / PSU-1)</name>
    <dbReference type="NCBI Taxonomy" id="203123"/>
    <lineage>
        <taxon>Bacteria</taxon>
        <taxon>Bacillati</taxon>
        <taxon>Bacillota</taxon>
        <taxon>Bacilli</taxon>
        <taxon>Lactobacillales</taxon>
        <taxon>Lactobacillaceae</taxon>
        <taxon>Oenococcus</taxon>
    </lineage>
</organism>
<name>GATB_OENOB</name>
<evidence type="ECO:0000255" key="1">
    <source>
        <dbReference type="HAMAP-Rule" id="MF_00121"/>
    </source>
</evidence>
<keyword id="KW-0067">ATP-binding</keyword>
<keyword id="KW-0436">Ligase</keyword>
<keyword id="KW-0547">Nucleotide-binding</keyword>
<keyword id="KW-0648">Protein biosynthesis</keyword>
<keyword id="KW-1185">Reference proteome</keyword>
<sequence>MSSFETTIGLEVHVELKTKSKAFSLSPVNFGDPANENTNVIDWGYPGVLPSANKGALESGMMAALALNAQITRDVHWDRKNYFYPDNPKSYQVTQQQTPIGHDGYVEIKKEDGTSKRIGIKELHVEEDAGKNSHSGKGYSLVDLNRQGTPLVEIVSQPNISSPDEAYLYLEKLRQLIQFTGISDVKMQEGSMRVDINISVRPIGAEKYGTKVEIKNVNSFQYAKNALAYEEQRQRDELMAGHIIGQETRRFDEPTKSTILMRVKEGADDYRYFPEPDLPVIHVSDEWIKAVKSSLPETADDRIARYINKFALSKKEAAVLTQTLEMANFYDQVVDDGADPKRTANYLIGDVNAYLNETQLDLQDTKLTPGHLSGMIKLIDNGTISTKQAKKVFTAITDGEEPKAYVEKNGLVQLSDPNKLTPIINQILDDNQQSIDDFKGGKDRTIGYLTGQVMKKTHGNANPKIVHEILLAELKKR</sequence>
<proteinExistence type="inferred from homology"/>
<feature type="chain" id="PRO_1000016012" description="Aspartyl/glutamyl-tRNA(Asn/Gln) amidotransferase subunit B">
    <location>
        <begin position="1"/>
        <end position="477"/>
    </location>
</feature>
<comment type="function">
    <text evidence="1">Allows the formation of correctly charged Asn-tRNA(Asn) or Gln-tRNA(Gln) through the transamidation of misacylated Asp-tRNA(Asn) or Glu-tRNA(Gln) in organisms which lack either or both of asparaginyl-tRNA or glutaminyl-tRNA synthetases. The reaction takes place in the presence of glutamine and ATP through an activated phospho-Asp-tRNA(Asn) or phospho-Glu-tRNA(Gln).</text>
</comment>
<comment type="catalytic activity">
    <reaction evidence="1">
        <text>L-glutamyl-tRNA(Gln) + L-glutamine + ATP + H2O = L-glutaminyl-tRNA(Gln) + L-glutamate + ADP + phosphate + H(+)</text>
        <dbReference type="Rhea" id="RHEA:17521"/>
        <dbReference type="Rhea" id="RHEA-COMP:9681"/>
        <dbReference type="Rhea" id="RHEA-COMP:9684"/>
        <dbReference type="ChEBI" id="CHEBI:15377"/>
        <dbReference type="ChEBI" id="CHEBI:15378"/>
        <dbReference type="ChEBI" id="CHEBI:29985"/>
        <dbReference type="ChEBI" id="CHEBI:30616"/>
        <dbReference type="ChEBI" id="CHEBI:43474"/>
        <dbReference type="ChEBI" id="CHEBI:58359"/>
        <dbReference type="ChEBI" id="CHEBI:78520"/>
        <dbReference type="ChEBI" id="CHEBI:78521"/>
        <dbReference type="ChEBI" id="CHEBI:456216"/>
    </reaction>
</comment>
<comment type="catalytic activity">
    <reaction evidence="1">
        <text>L-aspartyl-tRNA(Asn) + L-glutamine + ATP + H2O = L-asparaginyl-tRNA(Asn) + L-glutamate + ADP + phosphate + 2 H(+)</text>
        <dbReference type="Rhea" id="RHEA:14513"/>
        <dbReference type="Rhea" id="RHEA-COMP:9674"/>
        <dbReference type="Rhea" id="RHEA-COMP:9677"/>
        <dbReference type="ChEBI" id="CHEBI:15377"/>
        <dbReference type="ChEBI" id="CHEBI:15378"/>
        <dbReference type="ChEBI" id="CHEBI:29985"/>
        <dbReference type="ChEBI" id="CHEBI:30616"/>
        <dbReference type="ChEBI" id="CHEBI:43474"/>
        <dbReference type="ChEBI" id="CHEBI:58359"/>
        <dbReference type="ChEBI" id="CHEBI:78515"/>
        <dbReference type="ChEBI" id="CHEBI:78516"/>
        <dbReference type="ChEBI" id="CHEBI:456216"/>
    </reaction>
</comment>
<comment type="subunit">
    <text evidence="1">Heterotrimer of A, B and C subunits.</text>
</comment>
<comment type="similarity">
    <text evidence="1">Belongs to the GatB/GatE family. GatB subfamily.</text>
</comment>
<gene>
    <name evidence="1" type="primary">gatB</name>
    <name type="ordered locus">OEOE_1693</name>
</gene>
<dbReference type="EC" id="6.3.5.-" evidence="1"/>
<dbReference type="EMBL" id="CP000411">
    <property type="protein sequence ID" value="ABJ57540.1"/>
    <property type="molecule type" value="Genomic_DNA"/>
</dbReference>
<dbReference type="RefSeq" id="WP_011677809.1">
    <property type="nucleotide sequence ID" value="NC_008528.1"/>
</dbReference>
<dbReference type="SMR" id="Q04DD2"/>
<dbReference type="STRING" id="203123.OEOE_1693"/>
<dbReference type="KEGG" id="ooe:OEOE_1693"/>
<dbReference type="PATRIC" id="fig|203123.7.peg.1726"/>
<dbReference type="eggNOG" id="COG0064">
    <property type="taxonomic scope" value="Bacteria"/>
</dbReference>
<dbReference type="HOGENOM" id="CLU_019240_0_1_9"/>
<dbReference type="Proteomes" id="UP000000774">
    <property type="component" value="Chromosome"/>
</dbReference>
<dbReference type="GO" id="GO:0050566">
    <property type="term" value="F:asparaginyl-tRNA synthase (glutamine-hydrolyzing) activity"/>
    <property type="evidence" value="ECO:0007669"/>
    <property type="project" value="RHEA"/>
</dbReference>
<dbReference type="GO" id="GO:0005524">
    <property type="term" value="F:ATP binding"/>
    <property type="evidence" value="ECO:0007669"/>
    <property type="project" value="UniProtKB-KW"/>
</dbReference>
<dbReference type="GO" id="GO:0050567">
    <property type="term" value="F:glutaminyl-tRNA synthase (glutamine-hydrolyzing) activity"/>
    <property type="evidence" value="ECO:0007669"/>
    <property type="project" value="UniProtKB-UniRule"/>
</dbReference>
<dbReference type="GO" id="GO:0070681">
    <property type="term" value="P:glutaminyl-tRNAGln biosynthesis via transamidation"/>
    <property type="evidence" value="ECO:0007669"/>
    <property type="project" value="TreeGrafter"/>
</dbReference>
<dbReference type="GO" id="GO:0006412">
    <property type="term" value="P:translation"/>
    <property type="evidence" value="ECO:0007669"/>
    <property type="project" value="UniProtKB-UniRule"/>
</dbReference>
<dbReference type="FunFam" id="1.10.10.410:FF:000001">
    <property type="entry name" value="Aspartyl/glutamyl-tRNA(Asn/Gln) amidotransferase subunit B"/>
    <property type="match status" value="1"/>
</dbReference>
<dbReference type="Gene3D" id="1.10.10.410">
    <property type="match status" value="1"/>
</dbReference>
<dbReference type="Gene3D" id="1.10.150.380">
    <property type="entry name" value="GatB domain, N-terminal subdomain"/>
    <property type="match status" value="1"/>
</dbReference>
<dbReference type="HAMAP" id="MF_00121">
    <property type="entry name" value="GatB"/>
    <property type="match status" value="1"/>
</dbReference>
<dbReference type="InterPro" id="IPR017959">
    <property type="entry name" value="Asn/Gln-tRNA_amidoTrfase_suB/E"/>
</dbReference>
<dbReference type="InterPro" id="IPR006075">
    <property type="entry name" value="Asn/Gln-tRNA_Trfase_suB/E_cat"/>
</dbReference>
<dbReference type="InterPro" id="IPR018027">
    <property type="entry name" value="Asn/Gln_amidotransferase"/>
</dbReference>
<dbReference type="InterPro" id="IPR003789">
    <property type="entry name" value="Asn/Gln_tRNA_amidoTrase-B-like"/>
</dbReference>
<dbReference type="InterPro" id="IPR004413">
    <property type="entry name" value="GatB"/>
</dbReference>
<dbReference type="InterPro" id="IPR042114">
    <property type="entry name" value="GatB_C_1"/>
</dbReference>
<dbReference type="InterPro" id="IPR023168">
    <property type="entry name" value="GatB_Yqey_C_2"/>
</dbReference>
<dbReference type="InterPro" id="IPR017958">
    <property type="entry name" value="Gln-tRNA_amidoTrfase_suB_CS"/>
</dbReference>
<dbReference type="InterPro" id="IPR014746">
    <property type="entry name" value="Gln_synth/guanido_kin_cat_dom"/>
</dbReference>
<dbReference type="NCBIfam" id="TIGR00133">
    <property type="entry name" value="gatB"/>
    <property type="match status" value="1"/>
</dbReference>
<dbReference type="NCBIfam" id="NF004011">
    <property type="entry name" value="PRK05477.1-1"/>
    <property type="match status" value="1"/>
</dbReference>
<dbReference type="NCBIfam" id="NF004012">
    <property type="entry name" value="PRK05477.1-2"/>
    <property type="match status" value="1"/>
</dbReference>
<dbReference type="NCBIfam" id="NF004014">
    <property type="entry name" value="PRK05477.1-4"/>
    <property type="match status" value="1"/>
</dbReference>
<dbReference type="PANTHER" id="PTHR11659">
    <property type="entry name" value="GLUTAMYL-TRNA GLN AMIDOTRANSFERASE SUBUNIT B MITOCHONDRIAL AND PROKARYOTIC PET112-RELATED"/>
    <property type="match status" value="1"/>
</dbReference>
<dbReference type="PANTHER" id="PTHR11659:SF0">
    <property type="entry name" value="GLUTAMYL-TRNA(GLN) AMIDOTRANSFERASE SUBUNIT B, MITOCHONDRIAL"/>
    <property type="match status" value="1"/>
</dbReference>
<dbReference type="Pfam" id="PF02934">
    <property type="entry name" value="GatB_N"/>
    <property type="match status" value="1"/>
</dbReference>
<dbReference type="Pfam" id="PF02637">
    <property type="entry name" value="GatB_Yqey"/>
    <property type="match status" value="1"/>
</dbReference>
<dbReference type="SMART" id="SM00845">
    <property type="entry name" value="GatB_Yqey"/>
    <property type="match status" value="1"/>
</dbReference>
<dbReference type="SUPFAM" id="SSF89095">
    <property type="entry name" value="GatB/YqeY motif"/>
    <property type="match status" value="1"/>
</dbReference>
<dbReference type="SUPFAM" id="SSF55931">
    <property type="entry name" value="Glutamine synthetase/guanido kinase"/>
    <property type="match status" value="1"/>
</dbReference>
<dbReference type="PROSITE" id="PS01234">
    <property type="entry name" value="GATB"/>
    <property type="match status" value="1"/>
</dbReference>
<protein>
    <recommendedName>
        <fullName evidence="1">Aspartyl/glutamyl-tRNA(Asn/Gln) amidotransferase subunit B</fullName>
        <shortName evidence="1">Asp/Glu-ADT subunit B</shortName>
        <ecNumber evidence="1">6.3.5.-</ecNumber>
    </recommendedName>
</protein>